<organism>
    <name type="scientific">Shigella sonnei (strain Ss046)</name>
    <dbReference type="NCBI Taxonomy" id="300269"/>
    <lineage>
        <taxon>Bacteria</taxon>
        <taxon>Pseudomonadati</taxon>
        <taxon>Pseudomonadota</taxon>
        <taxon>Gammaproteobacteria</taxon>
        <taxon>Enterobacterales</taxon>
        <taxon>Enterobacteriaceae</taxon>
        <taxon>Shigella</taxon>
    </lineage>
</organism>
<evidence type="ECO:0000255" key="1">
    <source>
        <dbReference type="HAMAP-Rule" id="MF_01564"/>
    </source>
</evidence>
<gene>
    <name evidence="1" type="primary">tusB</name>
    <name type="ordered locus">SSON_3473</name>
</gene>
<proteinExistence type="inferred from homology"/>
<dbReference type="EMBL" id="CP000038">
    <property type="protein sequence ID" value="AAZ90033.1"/>
    <property type="molecule type" value="Genomic_DNA"/>
</dbReference>
<dbReference type="RefSeq" id="WP_000903367.1">
    <property type="nucleotide sequence ID" value="NC_007384.1"/>
</dbReference>
<dbReference type="SMR" id="Q3YWS9"/>
<dbReference type="GeneID" id="93778655"/>
<dbReference type="KEGG" id="ssn:SSON_3473"/>
<dbReference type="HOGENOM" id="CLU_166087_2_1_6"/>
<dbReference type="Proteomes" id="UP000002529">
    <property type="component" value="Chromosome"/>
</dbReference>
<dbReference type="GO" id="GO:1990228">
    <property type="term" value="C:sulfurtransferase complex"/>
    <property type="evidence" value="ECO:0007669"/>
    <property type="project" value="TreeGrafter"/>
</dbReference>
<dbReference type="GO" id="GO:0002143">
    <property type="term" value="P:tRNA wobble position uridine thiolation"/>
    <property type="evidence" value="ECO:0007669"/>
    <property type="project" value="InterPro"/>
</dbReference>
<dbReference type="FunFam" id="3.40.1260.10:FF:000002">
    <property type="entry name" value="Sulfurtransferase TusB"/>
    <property type="match status" value="1"/>
</dbReference>
<dbReference type="Gene3D" id="3.40.1260.10">
    <property type="entry name" value="DsrEFH-like"/>
    <property type="match status" value="1"/>
</dbReference>
<dbReference type="HAMAP" id="MF_01564">
    <property type="entry name" value="Thiourid_synth_B"/>
    <property type="match status" value="1"/>
</dbReference>
<dbReference type="InterPro" id="IPR027396">
    <property type="entry name" value="DsrEFH-like"/>
</dbReference>
<dbReference type="InterPro" id="IPR023526">
    <property type="entry name" value="Sulphur_relay_TusB"/>
</dbReference>
<dbReference type="InterPro" id="IPR007215">
    <property type="entry name" value="Sulphur_relay_TusB/DsrH"/>
</dbReference>
<dbReference type="NCBIfam" id="NF010035">
    <property type="entry name" value="PRK13510.1"/>
    <property type="match status" value="1"/>
</dbReference>
<dbReference type="NCBIfam" id="TIGR03011">
    <property type="entry name" value="sulf_tusB_dsrH"/>
    <property type="match status" value="1"/>
</dbReference>
<dbReference type="PANTHER" id="PTHR37526">
    <property type="entry name" value="PROTEIN TUSB"/>
    <property type="match status" value="1"/>
</dbReference>
<dbReference type="PANTHER" id="PTHR37526:SF1">
    <property type="entry name" value="PROTEIN TUSB"/>
    <property type="match status" value="1"/>
</dbReference>
<dbReference type="Pfam" id="PF04077">
    <property type="entry name" value="DsrH"/>
    <property type="match status" value="1"/>
</dbReference>
<dbReference type="SUPFAM" id="SSF75169">
    <property type="entry name" value="DsrEFH-like"/>
    <property type="match status" value="1"/>
</dbReference>
<name>TUSB_SHISS</name>
<feature type="chain" id="PRO_0000234523" description="Protein TusB">
    <location>
        <begin position="1"/>
        <end position="95"/>
    </location>
</feature>
<protein>
    <recommendedName>
        <fullName evidence="1">Protein TusB</fullName>
    </recommendedName>
    <alternativeName>
        <fullName evidence="1">tRNA 2-thiouridine synthesizing protein B</fullName>
    </alternativeName>
</protein>
<accession>Q3YWS9</accession>
<comment type="function">
    <text evidence="1">Part of a sulfur-relay system required for 2-thiolation of 5-methylaminomethyl-2-thiouridine (mnm(5)s(2)U) at tRNA wobble positions.</text>
</comment>
<comment type="subunit">
    <text evidence="1">Heterohexamer, formed by a dimer of trimers. The hexameric TusBCD complex contains 2 copies each of TusB, TusC and TusD. The TusBCD complex interacts with TusE.</text>
</comment>
<comment type="subcellular location">
    <subcellularLocation>
        <location evidence="1">Cytoplasm</location>
    </subcellularLocation>
</comment>
<comment type="similarity">
    <text evidence="1">Belongs to the DsrH/TusB family.</text>
</comment>
<sequence length="95" mass="10662">MLHTLHRSPWLADFAALLRLLSEGDELLLLQDGVTAAVDGNRYLESLRNAPIKVYALNEDLIARGLTGQISNDIIPIDYTDFVRLTVKHSSQMAW</sequence>
<keyword id="KW-0963">Cytoplasm</keyword>
<keyword id="KW-1185">Reference proteome</keyword>
<keyword id="KW-0819">tRNA processing</keyword>
<reference key="1">
    <citation type="journal article" date="2005" name="Nucleic Acids Res.">
        <title>Genome dynamics and diversity of Shigella species, the etiologic agents of bacillary dysentery.</title>
        <authorList>
            <person name="Yang F."/>
            <person name="Yang J."/>
            <person name="Zhang X."/>
            <person name="Chen L."/>
            <person name="Jiang Y."/>
            <person name="Yan Y."/>
            <person name="Tang X."/>
            <person name="Wang J."/>
            <person name="Xiong Z."/>
            <person name="Dong J."/>
            <person name="Xue Y."/>
            <person name="Zhu Y."/>
            <person name="Xu X."/>
            <person name="Sun L."/>
            <person name="Chen S."/>
            <person name="Nie H."/>
            <person name="Peng J."/>
            <person name="Xu J."/>
            <person name="Wang Y."/>
            <person name="Yuan Z."/>
            <person name="Wen Y."/>
            <person name="Yao Z."/>
            <person name="Shen Y."/>
            <person name="Qiang B."/>
            <person name="Hou Y."/>
            <person name="Yu J."/>
            <person name="Jin Q."/>
        </authorList>
    </citation>
    <scope>NUCLEOTIDE SEQUENCE [LARGE SCALE GENOMIC DNA]</scope>
    <source>
        <strain>Ss046</strain>
    </source>
</reference>